<name>NDB4N_TITSE</name>
<evidence type="ECO:0000269" key="1">
    <source>
    </source>
</evidence>
<evidence type="ECO:0000269" key="2">
    <source>
    </source>
</evidence>
<evidence type="ECO:0000269" key="3">
    <source>
    </source>
</evidence>
<evidence type="ECO:0000303" key="4">
    <source>
    </source>
</evidence>
<evidence type="ECO:0000303" key="5">
    <source>
    </source>
</evidence>
<evidence type="ECO:0000305" key="6"/>
<evidence type="ECO:0000305" key="7">
    <source>
    </source>
</evidence>
<feature type="signal peptide" evidence="7">
    <location>
        <begin position="1"/>
        <end position="22"/>
    </location>
</feature>
<feature type="peptide" id="PRO_5001155573" description="Antimicrobial peptide TsAP-2" evidence="1">
    <location>
        <begin position="23"/>
        <end position="39"/>
    </location>
</feature>
<feature type="propeptide" id="PRO_5001155574" evidence="7">
    <location>
        <begin position="45"/>
        <end position="73"/>
    </location>
</feature>
<feature type="modified residue" description="Lysine amide" evidence="1">
    <location>
        <position position="39"/>
    </location>
</feature>
<feature type="mutagenesis site" description="Important increase of antimicrobial and hemolytic activities; when associated wiTH 32-K-K-33 and K-36." evidence="1">
    <original>G</original>
    <variation>K</variation>
    <location>
        <position position="29"/>
    </location>
</feature>
<feature type="mutagenesis site" description="Important increase of antimicrobial and hemolytic activities; when associated with K-29 and K-36." evidence="1">
    <original>GG</original>
    <variation>KK</variation>
    <location>
        <begin position="32"/>
        <end position="33"/>
    </location>
</feature>
<feature type="mutagenesis site" description="Important increase of antimicrobial and hemolytic activities; when associated with K-29 and 32-K-K-33." evidence="1">
    <original>S</original>
    <variation>K</variation>
    <location>
        <position position="36"/>
    </location>
</feature>
<sequence length="73" mass="8391">MQIKHLITIFFLVLIVADHCHAFLGMIPGLIGGLISAFKGRRKREITSQIEQYRNLQKREAELENLLANLPVY</sequence>
<protein>
    <recommendedName>
        <fullName evidence="4">Antimicrobial peptide TsAP-2</fullName>
    </recommendedName>
    <alternativeName>
        <fullName evidence="5">Non-disulfide-bridged peptide 4.23</fullName>
        <shortName evidence="5">NDBP-4.23</shortName>
    </alternativeName>
</protein>
<organism>
    <name type="scientific">Tityus serrulatus</name>
    <name type="common">Brazilian scorpion</name>
    <dbReference type="NCBI Taxonomy" id="6887"/>
    <lineage>
        <taxon>Eukaryota</taxon>
        <taxon>Metazoa</taxon>
        <taxon>Ecdysozoa</taxon>
        <taxon>Arthropoda</taxon>
        <taxon>Chelicerata</taxon>
        <taxon>Arachnida</taxon>
        <taxon>Scorpiones</taxon>
        <taxon>Buthida</taxon>
        <taxon>Buthoidea</taxon>
        <taxon>Buthidae</taxon>
        <taxon>Tityus</taxon>
    </lineage>
</organism>
<accession>S6D3A7</accession>
<dbReference type="EMBL" id="HF677517">
    <property type="protein sequence ID" value="CCQ98792.1"/>
    <property type="molecule type" value="mRNA"/>
</dbReference>
<dbReference type="SMR" id="S6D3A7"/>
<dbReference type="GO" id="GO:0005576">
    <property type="term" value="C:extracellular region"/>
    <property type="evidence" value="ECO:0007669"/>
    <property type="project" value="UniProtKB-SubCell"/>
</dbReference>
<dbReference type="GO" id="GO:0042742">
    <property type="term" value="P:defense response to bacterium"/>
    <property type="evidence" value="ECO:0007669"/>
    <property type="project" value="UniProtKB-KW"/>
</dbReference>
<dbReference type="GO" id="GO:0050832">
    <property type="term" value="P:defense response to fungus"/>
    <property type="evidence" value="ECO:0007669"/>
    <property type="project" value="UniProtKB-KW"/>
</dbReference>
<dbReference type="GO" id="GO:0031640">
    <property type="term" value="P:killing of cells of another organism"/>
    <property type="evidence" value="ECO:0007669"/>
    <property type="project" value="UniProtKB-KW"/>
</dbReference>
<proteinExistence type="evidence at protein level"/>
<comment type="function">
    <text evidence="1 2 3">Antimicrobial peptide (PubMed:23770440, PubMed:27567704, PubMed:27917162). Has a high antibacterial activity against the Gram-positive bacterium S.aureus (MIC=5-17.30 uM), the methicillin-resistant S.aureus (MRSA) (MIC=17.30 uM), and E.faecalis (MIC=69.23 uM) (PubMed:23770440, PubMed:27567704). Has antifungal activity against Candida spp. and one Cryptococcus neoformans strains with MICs values ranging from 6.25 to 100 uM (PubMed:23770440, PubMed:27567704, PubMed:27917162). Also shows an inhibitory activity on C.albicans biofilms at high concentrations (PubMed:27917162). Has a moderate hemolytic potency (18% at 20 uM) (PubMed:23770440, PubMed:27567704). Also inhibits the growth of the five human cancer cell lines tested (the squamous carcinoma cell line H157 (IC(50)=4.1 uM), the lung adenocarcinoma cell line H838 (11.0 uM), the breast carcinoma cell line MCF-7 (6.4 uM), the androgen-independent prostate adenocarcinoma cell line PC3 (13.3 uM) and the glioblastoma cell line U251-MG (15.4 uM)) (PubMed:23770440). In the model of polymicrobial sepsis, it exhibits an antibiotic effect, reducing the levels of microorganisms in the infectious focus and the inflammatory responses in the lung and cecum of septic animals (PubMed:27567704).</text>
</comment>
<comment type="biophysicochemical properties">
    <phDependence>
        <text evidence="2">Stable to pH variation.</text>
    </phDependence>
</comment>
<comment type="subcellular location">
    <subcellularLocation>
        <location evidence="1">Secreted</location>
    </subcellularLocation>
</comment>
<comment type="tissue specificity">
    <text evidence="7">Expressed by the venom gland.</text>
</comment>
<comment type="mass spectrometry" mass="1733.32" method="Electrospray" evidence="1"/>
<comment type="miscellaneous">
    <text evidence="6">The primary structure of the mature peptide is identical to that of NDBP4.23-like from Tityus costatus (AC Q5G8B5).</text>
</comment>
<comment type="miscellaneous">
    <text evidence="1 3">Negative results: does not inhibit the Gram-negative bacterium E.coli (PubMed:23770440). Does not show antifungal activity against Candida glabrata (ATCC90030) (MIC&gt;400 uM) (PubMed:27917162).</text>
</comment>
<comment type="similarity">
    <text evidence="6">Belongs to the non-disulfide-bridged peptide (NDBP) superfamily. Short antimicrobial peptide (group 4) family.</text>
</comment>
<reference key="1">
    <citation type="journal article" date="2013" name="Biochimie">
        <title>Two peptides, TsAP-1 and TsAP-2, from the venom of the Brazilian yellow scorpion, Tityus serrulatus: evaluation of their antimicrobial and anticancer activities.</title>
        <authorList>
            <person name="Guo X."/>
            <person name="Ma C."/>
            <person name="Du Q."/>
            <person name="Wei R."/>
            <person name="Wang L."/>
            <person name="Zhou M."/>
            <person name="Chen T."/>
            <person name="Shaw C."/>
        </authorList>
    </citation>
    <scope>NUCLEOTIDE SEQUENCE [MRNA]</scope>
    <scope>FUNCTION</scope>
    <scope>SYNTHESIS OF 23-39</scope>
    <scope>MUTAGENESIS OF GLY-29; 32-GLY-GLY-33 AND SER-36</scope>
    <scope>MASS SPECTROMETRY</scope>
    <scope>AMIDATION AT LYS-39</scope>
    <scope>SUBCELLULAR LOCATION</scope>
    <source>
        <tissue>Venom</tissue>
        <tissue>Venom gland</tissue>
    </source>
</reference>
<reference key="2">
    <citation type="journal article" date="2016" name="Front. Microbiol.">
        <title>Activity of scorpion venom-derived antifungal peptides against planktonic cells of Candida spp. and Cryptococcus neoformans and Candida albicans biofilms.</title>
        <authorList>
            <person name="Guilhelmelli F."/>
            <person name="Vilela N."/>
            <person name="Smidt K.S."/>
            <person name="de Oliveira M.A."/>
            <person name="da Cunha Morales Alvares A."/>
            <person name="Rigonatto M.C."/>
            <person name="da Silva Costa P.H."/>
            <person name="Tavares A.H."/>
            <person name="de Freitas S.M."/>
            <person name="Nicola A.M."/>
            <person name="Franco O.L."/>
            <person name="Derengowski L.D."/>
            <person name="Schwartz E.F."/>
            <person name="Mortari M.R."/>
            <person name="Bocca A.L."/>
            <person name="Albuquerque P."/>
            <person name="Silva-Pereira I."/>
        </authorList>
    </citation>
    <scope>FUNCTION</scope>
    <scope>SYNTHESIS OF 23-39</scope>
</reference>
<reference key="3">
    <citation type="journal article" date="2016" name="Toxicon">
        <title>Stigmurin and TsAP-2 from Tityus stigmurus scorpion venom: assessment of structure and therapeutic potential in experimental sepsis.</title>
        <authorList>
            <person name="Daniele-Silva A."/>
            <person name="Machado R.J."/>
            <person name="Monteiro N.K."/>
            <person name="Estrela A.B."/>
            <person name="Santos E.C."/>
            <person name="Carvalho E."/>
            <person name="Araujo Junior R.F."/>
            <person name="Melo-Silveira R.F."/>
            <person name="Rocha H.A."/>
            <person name="Silva-Junior A.A."/>
            <person name="Fernandes-Pedrosa M.F."/>
        </authorList>
    </citation>
    <scope>FUNCTION</scope>
    <scope>BIOPHYSICOCHEMICAL PROPERTIES</scope>
    <scope>BIOASSAY</scope>
</reference>
<reference key="4">
    <citation type="journal article" date="2014" name="Peptides">
        <title>Scorpion venom peptides with no disulfide bridges: a review.</title>
        <authorList>
            <person name="Almaaytah A."/>
            <person name="Albalas Q."/>
        </authorList>
    </citation>
    <scope>NOMENCLATURE</scope>
</reference>
<keyword id="KW-0027">Amidation</keyword>
<keyword id="KW-0044">Antibiotic</keyword>
<keyword id="KW-0929">Antimicrobial</keyword>
<keyword id="KW-0204">Cytolysis</keyword>
<keyword id="KW-0295">Fungicide</keyword>
<keyword id="KW-0354">Hemolysis</keyword>
<keyword id="KW-0964">Secreted</keyword>
<keyword id="KW-0732">Signal</keyword>